<name>Y1352_MYCTO</name>
<dbReference type="EMBL" id="AE000516">
    <property type="protein sequence ID" value="AAK45658.1"/>
    <property type="molecule type" value="Genomic_DNA"/>
</dbReference>
<dbReference type="PIR" id="G70740">
    <property type="entry name" value="G70740"/>
</dbReference>
<dbReference type="RefSeq" id="WP_003406967.1">
    <property type="nucleotide sequence ID" value="NZ_KK341227.1"/>
</dbReference>
<dbReference type="KEGG" id="mtc:MT1395"/>
<dbReference type="PATRIC" id="fig|83331.31.peg.1502"/>
<dbReference type="HOGENOM" id="CLU_163985_0_0_11"/>
<dbReference type="Proteomes" id="UP000001020">
    <property type="component" value="Chromosome"/>
</dbReference>
<protein>
    <recommendedName>
        <fullName>Uncharacterized protein MT1395</fullName>
    </recommendedName>
</protein>
<gene>
    <name type="ordered locus">MT1395</name>
</gene>
<keyword id="KW-1185">Reference proteome</keyword>
<keyword id="KW-0732">Signal</keyword>
<sequence>MARTLALRASAGLVAGMAMAAITLAPGARAETGEQFPGDGVFLVGTDIAPGTYRTEGPSNPLILVFGRVSELSTCSWSTHSAPEVSNENIVDTNTSMGPMSVVIPPTVAAFQTHNCKLWMRIS</sequence>
<organism>
    <name type="scientific">Mycobacterium tuberculosis (strain CDC 1551 / Oshkosh)</name>
    <dbReference type="NCBI Taxonomy" id="83331"/>
    <lineage>
        <taxon>Bacteria</taxon>
        <taxon>Bacillati</taxon>
        <taxon>Actinomycetota</taxon>
        <taxon>Actinomycetes</taxon>
        <taxon>Mycobacteriales</taxon>
        <taxon>Mycobacteriaceae</taxon>
        <taxon>Mycobacterium</taxon>
        <taxon>Mycobacterium tuberculosis complex</taxon>
    </lineage>
</organism>
<proteinExistence type="inferred from homology"/>
<reference key="1">
    <citation type="journal article" date="2002" name="J. Bacteriol.">
        <title>Whole-genome comparison of Mycobacterium tuberculosis clinical and laboratory strains.</title>
        <authorList>
            <person name="Fleischmann R.D."/>
            <person name="Alland D."/>
            <person name="Eisen J.A."/>
            <person name="Carpenter L."/>
            <person name="White O."/>
            <person name="Peterson J.D."/>
            <person name="DeBoy R.T."/>
            <person name="Dodson R.J."/>
            <person name="Gwinn M.L."/>
            <person name="Haft D.H."/>
            <person name="Hickey E.K."/>
            <person name="Kolonay J.F."/>
            <person name="Nelson W.C."/>
            <person name="Umayam L.A."/>
            <person name="Ermolaeva M.D."/>
            <person name="Salzberg S.L."/>
            <person name="Delcher A."/>
            <person name="Utterback T.R."/>
            <person name="Weidman J.F."/>
            <person name="Khouri H.M."/>
            <person name="Gill J."/>
            <person name="Mikula A."/>
            <person name="Bishai W."/>
            <person name="Jacobs W.R. Jr."/>
            <person name="Venter J.C."/>
            <person name="Fraser C.M."/>
        </authorList>
    </citation>
    <scope>NUCLEOTIDE SEQUENCE [LARGE SCALE GENOMIC DNA]</scope>
    <source>
        <strain>CDC 1551 / Oshkosh</strain>
    </source>
</reference>
<evidence type="ECO:0000255" key="1"/>
<feature type="signal peptide" evidence="1">
    <location>
        <begin position="1"/>
        <end position="20"/>
    </location>
</feature>
<feature type="chain" id="PRO_0000427383" description="Uncharacterized protein MT1395">
    <location>
        <begin position="21"/>
        <end position="123"/>
    </location>
</feature>
<accession>P9WM14</accession>
<accession>L0T809</accession>
<accession>P64823</accession>
<accession>Q11022</accession>